<name>ORML3_HUMAN</name>
<proteinExistence type="evidence at protein level"/>
<evidence type="ECO:0000255" key="1"/>
<evidence type="ECO:0000269" key="2">
    <source>
    </source>
</evidence>
<evidence type="ECO:0000269" key="3">
    <source>
    </source>
</evidence>
<evidence type="ECO:0000269" key="4">
    <source>
    </source>
</evidence>
<evidence type="ECO:0000269" key="5">
    <source>
    </source>
</evidence>
<evidence type="ECO:0000269" key="6">
    <source>
    </source>
</evidence>
<evidence type="ECO:0000269" key="7">
    <source>
    </source>
</evidence>
<evidence type="ECO:0000269" key="8">
    <source>
    </source>
</evidence>
<evidence type="ECO:0000269" key="9">
    <source>
    </source>
</evidence>
<evidence type="ECO:0000269" key="10">
    <source>
    </source>
</evidence>
<evidence type="ECO:0000269" key="11">
    <source>
    </source>
</evidence>
<evidence type="ECO:0000269" key="12">
    <source>
    </source>
</evidence>
<evidence type="ECO:0000269" key="13">
    <source>
    </source>
</evidence>
<evidence type="ECO:0000303" key="14">
    <source ref="3"/>
</evidence>
<evidence type="ECO:0000305" key="15"/>
<evidence type="ECO:0007744" key="16">
    <source>
        <dbReference type="PDB" id="6M4N"/>
    </source>
</evidence>
<evidence type="ECO:0007744" key="17">
    <source>
        <dbReference type="PDB" id="6M4O"/>
    </source>
</evidence>
<evidence type="ECO:0007744" key="18">
    <source>
        <dbReference type="PDB" id="7CQI"/>
    </source>
</evidence>
<evidence type="ECO:0007744" key="19">
    <source>
        <dbReference type="PDB" id="7CQK"/>
    </source>
</evidence>
<evidence type="ECO:0007744" key="20">
    <source>
        <dbReference type="PDB" id="7K0M"/>
    </source>
</evidence>
<evidence type="ECO:0007744" key="21">
    <source>
        <dbReference type="PDB" id="7K0N"/>
    </source>
</evidence>
<evidence type="ECO:0007744" key="22">
    <source>
        <dbReference type="PDB" id="7K0O"/>
    </source>
</evidence>
<evidence type="ECO:0007744" key="23">
    <source>
        <dbReference type="PDB" id="7K0P"/>
    </source>
</evidence>
<evidence type="ECO:0007744" key="24">
    <source>
        <dbReference type="PDB" id="7K0Q"/>
    </source>
</evidence>
<evidence type="ECO:0007744" key="25">
    <source>
        <dbReference type="PDB" id="7YIU"/>
    </source>
</evidence>
<evidence type="ECO:0007744" key="26">
    <source>
        <dbReference type="PDB" id="7YIY"/>
    </source>
</evidence>
<evidence type="ECO:0007744" key="27">
    <source>
        <dbReference type="PDB" id="7YJ1"/>
    </source>
</evidence>
<evidence type="ECO:0007744" key="28">
    <source>
        <dbReference type="PDB" id="7YJ2"/>
    </source>
</evidence>
<evidence type="ECO:0007829" key="29">
    <source>
        <dbReference type="PDB" id="7K0P"/>
    </source>
</evidence>
<evidence type="ECO:0007829" key="30">
    <source>
        <dbReference type="PDB" id="7K0Q"/>
    </source>
</evidence>
<evidence type="ECO:0007829" key="31">
    <source>
        <dbReference type="PDB" id="7YIY"/>
    </source>
</evidence>
<evidence type="ECO:0007829" key="32">
    <source>
        <dbReference type="PDB" id="7YJ2"/>
    </source>
</evidence>
<gene>
    <name type="primary">ORMDL3</name>
</gene>
<organism>
    <name type="scientific">Homo sapiens</name>
    <name type="common">Human</name>
    <dbReference type="NCBI Taxonomy" id="9606"/>
    <lineage>
        <taxon>Eukaryota</taxon>
        <taxon>Metazoa</taxon>
        <taxon>Chordata</taxon>
        <taxon>Craniata</taxon>
        <taxon>Vertebrata</taxon>
        <taxon>Euteleostomi</taxon>
        <taxon>Mammalia</taxon>
        <taxon>Eutheria</taxon>
        <taxon>Euarchontoglires</taxon>
        <taxon>Primates</taxon>
        <taxon>Haplorrhini</taxon>
        <taxon>Catarrhini</taxon>
        <taxon>Hominidae</taxon>
        <taxon>Homo</taxon>
    </lineage>
</organism>
<feature type="chain" id="PRO_0000215639" description="ORM1-like protein 3">
    <location>
        <begin position="1"/>
        <end position="153"/>
    </location>
</feature>
<feature type="topological domain" description="Cytoplasmic" evidence="1">
    <location>
        <begin position="1"/>
        <end position="21"/>
    </location>
</feature>
<feature type="transmembrane region" description="Helical" evidence="11 16 17 18 19">
    <location>
        <begin position="22"/>
        <end position="44"/>
    </location>
</feature>
<feature type="transmembrane region" description="Helical" evidence="11 16 17 18 19">
    <location>
        <begin position="45"/>
        <end position="63"/>
    </location>
</feature>
<feature type="topological domain" description="Cytoplasmic" evidence="1">
    <location>
        <begin position="64"/>
        <end position="100"/>
    </location>
</feature>
<feature type="transmembrane region" description="Helical" evidence="11 16 17 18 19">
    <location>
        <begin position="101"/>
        <end position="117"/>
    </location>
</feature>
<feature type="topological domain" description="Lumenal" evidence="1">
    <location>
        <begin position="118"/>
        <end position="121"/>
    </location>
</feature>
<feature type="transmembrane region" description="Helical" evidence="11 16 17 18 19">
    <location>
        <begin position="122"/>
        <end position="139"/>
    </location>
</feature>
<feature type="topological domain" description="Cytoplasmic" evidence="1">
    <location>
        <begin position="140"/>
        <end position="153"/>
    </location>
</feature>
<feature type="region of interest" description="Important for ceramide level-sensing" evidence="13">
    <location>
        <begin position="1"/>
        <end position="17"/>
    </location>
</feature>
<feature type="modified residue" description="Hydroxyproline" evidence="12">
    <location>
        <position position="137"/>
    </location>
</feature>
<feature type="splice variant" id="VSP_016052" description="In isoform 2." evidence="14">
    <location>
        <begin position="43"/>
        <end position="58"/>
    </location>
</feature>
<feature type="mutagenesis site" description="Impaired negative regulation of SPT complex activity in the presence of ceramides." evidence="13">
    <location>
        <begin position="2"/>
        <end position="17"/>
    </location>
</feature>
<feature type="mutagenesis site" description="Impaired negative regulation of SPT complex activity in the presence of ceramides." evidence="13">
    <location>
        <begin position="2"/>
        <end position="8"/>
    </location>
</feature>
<feature type="mutagenesis site" description="Impaired negative regulation of SPT complex activity in the presence of ceramides." evidence="13">
    <location>
        <position position="2"/>
    </location>
</feature>
<feature type="mutagenesis site" description="Disrupted ceramide binding; impaired negative regulation of SPT complex activity in the presence of ceramides; in the absence of ceramides, reduced affinity of SPT complex towards palmitoyl-CoA." evidence="13">
    <original>N</original>
    <variation>A</variation>
    <location>
        <position position="13"/>
    </location>
</feature>
<feature type="mutagenesis site" description="Impaired negative regulation of SPT complex activity in the presence of ceramides." evidence="13">
    <original>V</original>
    <variation>R</variation>
    <location>
        <position position="16"/>
    </location>
</feature>
<feature type="mutagenesis site" description="Impaired negative regulation of SPT complex activity in the presence of ceramides." evidence="13">
    <original>I</original>
    <variation>R</variation>
    <location>
        <position position="22"/>
    </location>
</feature>
<feature type="mutagenesis site" description="Impaired negative regulation of SPT complex activity in the presence of ceramides." evidence="13">
    <original>F</original>
    <variation>P</variation>
    <location>
        <position position="63"/>
    </location>
</feature>
<feature type="mutagenesis site" description="Impaired negative regulation of SPT complex activity in the presence of ceramides." evidence="13">
    <original>F</original>
    <variation>R</variation>
    <location>
        <position position="63"/>
    </location>
</feature>
<feature type="mutagenesis site" description="No effect on the negative regulation of SPT complex activity in the presence of ceramides." evidence="13">
    <original>H</original>
    <variation>A</variation>
    <location>
        <position position="85"/>
    </location>
</feature>
<feature type="mutagenesis site" description="Increased protein levels; decreased ubiquitination; increased negative regulation of SPT complex activity." evidence="12">
    <original>P</original>
    <variation>A</variation>
    <location>
        <position position="137"/>
    </location>
</feature>
<feature type="helix" evidence="31">
    <location>
        <begin position="12"/>
        <end position="14"/>
    </location>
</feature>
<feature type="helix" evidence="31">
    <location>
        <begin position="16"/>
        <end position="18"/>
    </location>
</feature>
<feature type="helix" evidence="31">
    <location>
        <begin position="22"/>
        <end position="38"/>
    </location>
</feature>
<feature type="strand" evidence="30">
    <location>
        <begin position="40"/>
        <end position="42"/>
    </location>
</feature>
<feature type="helix" evidence="31">
    <location>
        <begin position="45"/>
        <end position="65"/>
    </location>
</feature>
<feature type="strand" evidence="30">
    <location>
        <begin position="67"/>
        <end position="69"/>
    </location>
</feature>
<feature type="strand" evidence="32">
    <location>
        <begin position="71"/>
        <end position="73"/>
    </location>
</feature>
<feature type="turn" evidence="29">
    <location>
        <begin position="75"/>
        <end position="77"/>
    </location>
</feature>
<feature type="turn" evidence="31">
    <location>
        <begin position="79"/>
        <end position="82"/>
    </location>
</feature>
<feature type="helix" evidence="31">
    <location>
        <begin position="85"/>
        <end position="88"/>
    </location>
</feature>
<feature type="helix" evidence="31">
    <location>
        <begin position="89"/>
        <end position="92"/>
    </location>
</feature>
<feature type="strand" evidence="31">
    <location>
        <begin position="93"/>
        <end position="95"/>
    </location>
</feature>
<feature type="helix" evidence="31">
    <location>
        <begin position="97"/>
        <end position="115"/>
    </location>
</feature>
<feature type="turn" evidence="31">
    <location>
        <begin position="116"/>
        <end position="118"/>
    </location>
</feature>
<feature type="helix" evidence="31">
    <location>
        <begin position="121"/>
        <end position="132"/>
    </location>
</feature>
<feature type="turn" evidence="31">
    <location>
        <begin position="133"/>
        <end position="135"/>
    </location>
</feature>
<feature type="helix" evidence="31">
    <location>
        <begin position="136"/>
        <end position="138"/>
    </location>
</feature>
<feature type="helix" evidence="31">
    <location>
        <begin position="140"/>
        <end position="142"/>
    </location>
</feature>
<feature type="helix" evidence="31">
    <location>
        <begin position="147"/>
        <end position="149"/>
    </location>
</feature>
<comment type="function">
    <text evidence="8 9 13">Plays an essential role in the homeostatic regulation of sphingolipid de novo biosynthesis by modulating the activity of the serine palmitoyltransferase (SPT) in response to ceramide levels (PubMed:20182505, PubMed:30700557, PubMed:37308477). When complexed to SPT, the binding of ceramides to its N-terminus stabilizes a conformation that block SPT substrate entry, hence preventing SPT catalytic activity. Through this mechanism, maintains ceramide levels at sufficient concentrations for the production of complex sphingolipids, but which prevents the accumulation of ceramides to levels that trigger apoptosis (PubMed:37308477).</text>
</comment>
<comment type="subunit">
    <text evidence="8 10 11 13">Ceramide-sensitive subunit of the serine palmitoyltransferase (SPT) complex, which is also composed of SPTLC1, SPTLC2/3 and SPTSSA/B.</text>
</comment>
<comment type="interaction">
    <interactant intactId="EBI-721750">
        <id>Q8N138</id>
    </interactant>
    <interactant intactId="EBI-13059134">
        <id>Q13520</id>
        <label>AQP6</label>
    </interactant>
    <organismsDiffer>false</organismsDiffer>
    <experiments>3</experiments>
</comment>
<comment type="interaction">
    <interactant intactId="EBI-721750">
        <id>Q8N138</id>
    </interactant>
    <interactant intactId="EBI-11343438">
        <id>Q3SXY8</id>
        <label>ARL13B</label>
    </interactant>
    <organismsDiffer>false</organismsDiffer>
    <experiments>3</experiments>
</comment>
<comment type="interaction">
    <interactant intactId="EBI-721750">
        <id>Q8N138</id>
    </interactant>
    <interactant intactId="EBI-13381098">
        <id>Q8IYJ2-2</id>
        <label>C10orf67</label>
    </interactant>
    <organismsDiffer>false</organismsDiffer>
    <experiments>3</experiments>
</comment>
<comment type="interaction">
    <interactant intactId="EBI-721750">
        <id>Q8N138</id>
    </interactant>
    <interactant intactId="EBI-18202821">
        <id>Q8IU89</id>
        <label>CERS3</label>
    </interactant>
    <organismsDiffer>false</organismsDiffer>
    <experiments>3</experiments>
</comment>
<comment type="interaction">
    <interactant intactId="EBI-721750">
        <id>Q8N138</id>
    </interactant>
    <interactant intactId="EBI-745535">
        <id>Q8NI60</id>
        <label>COQ8A</label>
    </interactant>
    <organismsDiffer>false</organismsDiffer>
    <experiments>3</experiments>
</comment>
<comment type="interaction">
    <interactant intactId="EBI-721750">
        <id>Q8N138</id>
    </interactant>
    <interactant intactId="EBI-3915253">
        <id>Q15125</id>
        <label>EBP</label>
    </interactant>
    <organismsDiffer>false</organismsDiffer>
    <experiments>3</experiments>
</comment>
<comment type="interaction">
    <interactant intactId="EBI-721750">
        <id>Q8N138</id>
    </interactant>
    <interactant intactId="EBI-18535450">
        <id>Q9GZR5</id>
        <label>ELOVL4</label>
    </interactant>
    <organismsDiffer>false</organismsDiffer>
    <experiments>3</experiments>
</comment>
<comment type="interaction">
    <interactant intactId="EBI-721750">
        <id>Q8N138</id>
    </interactant>
    <interactant intactId="EBI-781551">
        <id>Q9Y282</id>
        <label>ERGIC3</label>
    </interactant>
    <organismsDiffer>false</organismsDiffer>
    <experiments>3</experiments>
</comment>
<comment type="interaction">
    <interactant intactId="EBI-721750">
        <id>Q8N138</id>
    </interactant>
    <interactant intactId="EBI-18304435">
        <id>Q5JX71</id>
        <label>FAM209A</label>
    </interactant>
    <organismsDiffer>false</organismsDiffer>
    <experiments>3</experiments>
</comment>
<comment type="interaction">
    <interactant intactId="EBI-721750">
        <id>Q8N138</id>
    </interactant>
    <interactant intactId="EBI-18908258">
        <id>O00258</id>
        <label>GET1</label>
    </interactant>
    <organismsDiffer>false</organismsDiffer>
    <experiments>3</experiments>
</comment>
<comment type="interaction">
    <interactant intactId="EBI-721750">
        <id>Q8N138</id>
    </interactant>
    <interactant intactId="EBI-17935713">
        <id>Q96P66</id>
        <label>GPR101</label>
    </interactant>
    <organismsDiffer>false</organismsDiffer>
    <experiments>3</experiments>
</comment>
<comment type="interaction">
    <interactant intactId="EBI-721750">
        <id>Q8N138</id>
    </interactant>
    <interactant intactId="EBI-13345167">
        <id>Q8TDT2</id>
        <label>GPR152</label>
    </interactant>
    <organismsDiffer>false</organismsDiffer>
    <experiments>3</experiments>
</comment>
<comment type="interaction">
    <interactant intactId="EBI-721750">
        <id>Q8N138</id>
    </interactant>
    <interactant intactId="EBI-18053395">
        <id>Q7Z5P4</id>
        <label>HSD17B13</label>
    </interactant>
    <organismsDiffer>false</organismsDiffer>
    <experiments>3</experiments>
</comment>
<comment type="interaction">
    <interactant intactId="EBI-721750">
        <id>Q8N138</id>
    </interactant>
    <interactant intactId="EBI-3934936">
        <id>O95279</id>
        <label>KCNK5</label>
    </interactant>
    <organismsDiffer>false</organismsDiffer>
    <experiments>3</experiments>
</comment>
<comment type="interaction">
    <interactant intactId="EBI-721750">
        <id>Q8N138</id>
    </interactant>
    <interactant intactId="EBI-750776">
        <id>O95214</id>
        <label>LEPROTL1</label>
    </interactant>
    <organismsDiffer>false</organismsDiffer>
    <experiments>3</experiments>
</comment>
<comment type="interaction">
    <interactant intactId="EBI-721750">
        <id>Q8N138</id>
    </interactant>
    <interactant intactId="EBI-3923617">
        <id>Q9H2K0</id>
        <label>MTIF3</label>
    </interactant>
    <organismsDiffer>false</organismsDiffer>
    <experiments>3</experiments>
</comment>
<comment type="interaction">
    <interactant intactId="EBI-721750">
        <id>Q8N138</id>
    </interactant>
    <interactant intactId="EBI-11337973">
        <id>Q9BRK0</id>
        <label>REEP2</label>
    </interactant>
    <organismsDiffer>false</organismsDiffer>
    <experiments>3</experiments>
</comment>
<comment type="interaction">
    <interactant intactId="EBI-721750">
        <id>Q8N138</id>
    </interactant>
    <interactant intactId="EBI-10192441">
        <id>Q86VR2</id>
        <label>RETREG3</label>
    </interactant>
    <organismsDiffer>false</organismsDiffer>
    <experiments>3</experiments>
</comment>
<comment type="interaction">
    <interactant intactId="EBI-721750">
        <id>Q8N138</id>
    </interactant>
    <interactant intactId="EBI-348482">
        <id>Q99942</id>
        <label>RNF5</label>
    </interactant>
    <organismsDiffer>false</organismsDiffer>
    <experiments>3</experiments>
</comment>
<comment type="interaction">
    <interactant intactId="EBI-721750">
        <id>Q8N138</id>
    </interactant>
    <interactant intactId="EBI-9395257">
        <id>Q03395</id>
        <label>ROM1</label>
    </interactant>
    <organismsDiffer>false</organismsDiffer>
    <experiments>3</experiments>
</comment>
<comment type="interaction">
    <interactant intactId="EBI-721750">
        <id>Q8N138</id>
    </interactant>
    <interactant intactId="EBI-3923031">
        <id>Q14973</id>
        <label>SLC10A1</label>
    </interactant>
    <organismsDiffer>false</organismsDiffer>
    <experiments>3</experiments>
</comment>
<comment type="interaction">
    <interactant intactId="EBI-721750">
        <id>Q8N138</id>
    </interactant>
    <interactant intactId="EBI-17295964">
        <id>Q9NQQ7-3</id>
        <label>SLC35C2</label>
    </interactant>
    <organismsDiffer>false</organismsDiffer>
    <experiments>3</experiments>
</comment>
<comment type="interaction">
    <interactant intactId="EBI-721750">
        <id>Q8N138</id>
    </interactant>
    <interactant intactId="EBI-4289564">
        <id>P30825</id>
        <label>SLC7A1</label>
    </interactant>
    <organismsDiffer>false</organismsDiffer>
    <experiments>3</experiments>
</comment>
<comment type="interaction">
    <interactant intactId="EBI-721750">
        <id>Q8N138</id>
    </interactant>
    <interactant intactId="EBI-1044323">
        <id>O15269</id>
        <label>SPTLC1</label>
    </interactant>
    <organismsDiffer>false</organismsDiffer>
    <experiments>3</experiments>
</comment>
<comment type="interaction">
    <interactant intactId="EBI-721750">
        <id>Q8N138</id>
    </interactant>
    <interactant intactId="EBI-8032987">
        <id>Q8N9I0</id>
        <label>SYT2</label>
    </interactant>
    <organismsDiffer>false</organismsDiffer>
    <experiments>3</experiments>
</comment>
<comment type="interaction">
    <interactant intactId="EBI-721750">
        <id>Q8N138</id>
    </interactant>
    <interactant intactId="EBI-10982110">
        <id>Q96Q45-2</id>
        <label>TMEM237</label>
    </interactant>
    <organismsDiffer>false</organismsDiffer>
    <experiments>3</experiments>
</comment>
<comment type="subcellular location">
    <subcellularLocation>
        <location evidence="2 7">Endoplasmic reticulum membrane</location>
        <topology evidence="2 7 11">Multi-pass membrane protein</topology>
    </subcellularLocation>
</comment>
<comment type="alternative products">
    <event type="alternative splicing"/>
    <isoform>
        <id>Q8N138-1</id>
        <name>1</name>
        <sequence type="displayed"/>
    </isoform>
    <isoform>
        <id>Q8N138-4</id>
        <name>2</name>
        <sequence type="described" ref="VSP_016052"/>
    </isoform>
</comment>
<comment type="tissue specificity">
    <text evidence="2">Widely expressed. Expressed in adult and fetal heart, brain, lung, liver, skeletal muscle and kidney. Expressed in adult pancreas and placenta and in fetal spleen and thymus.</text>
</comment>
<comment type="domain">
    <text evidence="10 13">Ceramides bind to ORMDL3 N-terminus and stabilize it in a conformation that physically restricts the accessibility of the substrates to their binding sites in the serine palmitoyltransferase (SPT) complex, hence inhibiting SPT catalytic activity. In the absence of ceramides, the N-terminus is flexible and permits substrate binding, thus liberating SPT from inhibition.</text>
</comment>
<comment type="PTM">
    <text evidence="12">When hydroxylated at Pro-137, ubiquitinated via 'Lys-48'-linkage, leading to proteasomal degradation. In endothelial cells, ORMDL3 proteasomal degradation is controlled by the sphingosine 1-phosphate receptor signaling pathway.</text>
</comment>
<comment type="disease" evidence="4 5 6">
    <disease id="DI-02482">
        <name>Asthma</name>
        <acronym>ASTHMA</acronym>
        <description>The most common chronic disease affecting children and young adults. It is a complex genetic disorder with a heterogeneous phenotype, largely attributed to the interactions among many genes and between these genes and the environment. It is characterized by recurrent attacks of paroxysmal dyspnea, with wheezing due to spasmodic contraction of the bronchi.</description>
        <dbReference type="MIM" id="600807"/>
    </disease>
    <text evidence="3">Disease susceptibility is associated with variants affecting the gene represented in this entry. SNPs on 17q21 locus that are associated with childhood asthma also show a consistent and strong association with transcript levels of ORMDL3, indicating that genetic variants regulating ORMDL3 expression are determinants of susceptibility to childhood asthma.</text>
</comment>
<comment type="similarity">
    <text evidence="15">Belongs to the ORM family.</text>
</comment>
<reference key="1">
    <citation type="journal article" date="2002" name="Genome Biol.">
        <title>ORMDL proteins are a conserved new family of endoplasmic reticulum membrane proteins.</title>
        <authorList>
            <person name="Hjelmqvist L."/>
            <person name="Tuson M."/>
            <person name="Marfany G."/>
            <person name="Herrero E."/>
            <person name="Balcells S."/>
            <person name="Gonzalez-Duarte R."/>
        </authorList>
    </citation>
    <scope>NUCLEOTIDE SEQUENCE [MRNA] (ISOFORM 1)</scope>
    <scope>SUBCELLULAR LOCATION</scope>
    <scope>TISSUE SPECIFICITY</scope>
</reference>
<reference key="2">
    <citation type="submission" date="2001-04" db="EMBL/GenBank/DDBJ databases">
        <title>An evolutionarily conserved gene from the HER-2/Neu amplicon defines a novel gene family.</title>
        <authorList>
            <person name="Luoh S.-W."/>
            <person name="Venkatesan N."/>
            <person name="Slamon D.J."/>
        </authorList>
    </citation>
    <scope>NUCLEOTIDE SEQUENCE [MRNA] (ISOFORM 1)</scope>
</reference>
<reference key="3">
    <citation type="submission" date="2003-08" db="EMBL/GenBank/DDBJ databases">
        <authorList>
            <person name="Li H."/>
            <person name="Yu R."/>
            <person name="Shen C."/>
            <person name="Zhou G."/>
            <person name="Ke R."/>
            <person name="Lin L."/>
            <person name="Yang S."/>
        </authorList>
    </citation>
    <scope>NUCLEOTIDE SEQUENCE [LARGE SCALE MRNA] (ISOFORM 2)</scope>
</reference>
<reference key="4">
    <citation type="journal article" date="2004" name="Nat. Genet.">
        <title>Complete sequencing and characterization of 21,243 full-length human cDNAs.</title>
        <authorList>
            <person name="Ota T."/>
            <person name="Suzuki Y."/>
            <person name="Nishikawa T."/>
            <person name="Otsuki T."/>
            <person name="Sugiyama T."/>
            <person name="Irie R."/>
            <person name="Wakamatsu A."/>
            <person name="Hayashi K."/>
            <person name="Sato H."/>
            <person name="Nagai K."/>
            <person name="Kimura K."/>
            <person name="Makita H."/>
            <person name="Sekine M."/>
            <person name="Obayashi M."/>
            <person name="Nishi T."/>
            <person name="Shibahara T."/>
            <person name="Tanaka T."/>
            <person name="Ishii S."/>
            <person name="Yamamoto J."/>
            <person name="Saito K."/>
            <person name="Kawai Y."/>
            <person name="Isono Y."/>
            <person name="Nakamura Y."/>
            <person name="Nagahari K."/>
            <person name="Murakami K."/>
            <person name="Yasuda T."/>
            <person name="Iwayanagi T."/>
            <person name="Wagatsuma M."/>
            <person name="Shiratori A."/>
            <person name="Sudo H."/>
            <person name="Hosoiri T."/>
            <person name="Kaku Y."/>
            <person name="Kodaira H."/>
            <person name="Kondo H."/>
            <person name="Sugawara M."/>
            <person name="Takahashi M."/>
            <person name="Kanda K."/>
            <person name="Yokoi T."/>
            <person name="Furuya T."/>
            <person name="Kikkawa E."/>
            <person name="Omura Y."/>
            <person name="Abe K."/>
            <person name="Kamihara K."/>
            <person name="Katsuta N."/>
            <person name="Sato K."/>
            <person name="Tanikawa M."/>
            <person name="Yamazaki M."/>
            <person name="Ninomiya K."/>
            <person name="Ishibashi T."/>
            <person name="Yamashita H."/>
            <person name="Murakawa K."/>
            <person name="Fujimori K."/>
            <person name="Tanai H."/>
            <person name="Kimata M."/>
            <person name="Watanabe M."/>
            <person name="Hiraoka S."/>
            <person name="Chiba Y."/>
            <person name="Ishida S."/>
            <person name="Ono Y."/>
            <person name="Takiguchi S."/>
            <person name="Watanabe S."/>
            <person name="Yosida M."/>
            <person name="Hotuta T."/>
            <person name="Kusano J."/>
            <person name="Kanehori K."/>
            <person name="Takahashi-Fujii A."/>
            <person name="Hara H."/>
            <person name="Tanase T.-O."/>
            <person name="Nomura Y."/>
            <person name="Togiya S."/>
            <person name="Komai F."/>
            <person name="Hara R."/>
            <person name="Takeuchi K."/>
            <person name="Arita M."/>
            <person name="Imose N."/>
            <person name="Musashino K."/>
            <person name="Yuuki H."/>
            <person name="Oshima A."/>
            <person name="Sasaki N."/>
            <person name="Aotsuka S."/>
            <person name="Yoshikawa Y."/>
            <person name="Matsunawa H."/>
            <person name="Ichihara T."/>
            <person name="Shiohata N."/>
            <person name="Sano S."/>
            <person name="Moriya S."/>
            <person name="Momiyama H."/>
            <person name="Satoh N."/>
            <person name="Takami S."/>
            <person name="Terashima Y."/>
            <person name="Suzuki O."/>
            <person name="Nakagawa S."/>
            <person name="Senoh A."/>
            <person name="Mizoguchi H."/>
            <person name="Goto Y."/>
            <person name="Shimizu F."/>
            <person name="Wakebe H."/>
            <person name="Hishigaki H."/>
            <person name="Watanabe T."/>
            <person name="Sugiyama A."/>
            <person name="Takemoto M."/>
            <person name="Kawakami B."/>
            <person name="Yamazaki M."/>
            <person name="Watanabe K."/>
            <person name="Kumagai A."/>
            <person name="Itakura S."/>
            <person name="Fukuzumi Y."/>
            <person name="Fujimori Y."/>
            <person name="Komiyama M."/>
            <person name="Tashiro H."/>
            <person name="Tanigami A."/>
            <person name="Fujiwara T."/>
            <person name="Ono T."/>
            <person name="Yamada K."/>
            <person name="Fujii Y."/>
            <person name="Ozaki K."/>
            <person name="Hirao M."/>
            <person name="Ohmori Y."/>
            <person name="Kawabata A."/>
            <person name="Hikiji T."/>
            <person name="Kobatake N."/>
            <person name="Inagaki H."/>
            <person name="Ikema Y."/>
            <person name="Okamoto S."/>
            <person name="Okitani R."/>
            <person name="Kawakami T."/>
            <person name="Noguchi S."/>
            <person name="Itoh T."/>
            <person name="Shigeta K."/>
            <person name="Senba T."/>
            <person name="Matsumura K."/>
            <person name="Nakajima Y."/>
            <person name="Mizuno T."/>
            <person name="Morinaga M."/>
            <person name="Sasaki M."/>
            <person name="Togashi T."/>
            <person name="Oyama M."/>
            <person name="Hata H."/>
            <person name="Watanabe M."/>
            <person name="Komatsu T."/>
            <person name="Mizushima-Sugano J."/>
            <person name="Satoh T."/>
            <person name="Shirai Y."/>
            <person name="Takahashi Y."/>
            <person name="Nakagawa K."/>
            <person name="Okumura K."/>
            <person name="Nagase T."/>
            <person name="Nomura N."/>
            <person name="Kikuchi H."/>
            <person name="Masuho Y."/>
            <person name="Yamashita R."/>
            <person name="Nakai K."/>
            <person name="Yada T."/>
            <person name="Nakamura Y."/>
            <person name="Ohara O."/>
            <person name="Isogai T."/>
            <person name="Sugano S."/>
        </authorList>
    </citation>
    <scope>NUCLEOTIDE SEQUENCE [LARGE SCALE MRNA] (ISOFORM 1)</scope>
    <source>
        <tissue>Placenta</tissue>
        <tissue>Testis</tissue>
    </source>
</reference>
<reference key="5">
    <citation type="submission" date="2005-07" db="EMBL/GenBank/DDBJ databases">
        <authorList>
            <person name="Mural R.J."/>
            <person name="Istrail S."/>
            <person name="Sutton G.G."/>
            <person name="Florea L."/>
            <person name="Halpern A.L."/>
            <person name="Mobarry C.M."/>
            <person name="Lippert R."/>
            <person name="Walenz B."/>
            <person name="Shatkay H."/>
            <person name="Dew I."/>
            <person name="Miller J.R."/>
            <person name="Flanigan M.J."/>
            <person name="Edwards N.J."/>
            <person name="Bolanos R."/>
            <person name="Fasulo D."/>
            <person name="Halldorsson B.V."/>
            <person name="Hannenhalli S."/>
            <person name="Turner R."/>
            <person name="Yooseph S."/>
            <person name="Lu F."/>
            <person name="Nusskern D.R."/>
            <person name="Shue B.C."/>
            <person name="Zheng X.H."/>
            <person name="Zhong F."/>
            <person name="Delcher A.L."/>
            <person name="Huson D.H."/>
            <person name="Kravitz S.A."/>
            <person name="Mouchard L."/>
            <person name="Reinert K."/>
            <person name="Remington K.A."/>
            <person name="Clark A.G."/>
            <person name="Waterman M.S."/>
            <person name="Eichler E.E."/>
            <person name="Adams M.D."/>
            <person name="Hunkapiller M.W."/>
            <person name="Myers E.W."/>
            <person name="Venter J.C."/>
        </authorList>
    </citation>
    <scope>NUCLEOTIDE SEQUENCE [LARGE SCALE GENOMIC DNA]</scope>
</reference>
<reference key="6">
    <citation type="journal article" date="2004" name="Genome Res.">
        <title>The status, quality, and expansion of the NIH full-length cDNA project: the Mammalian Gene Collection (MGC).</title>
        <authorList>
            <consortium name="The MGC Project Team"/>
        </authorList>
    </citation>
    <scope>NUCLEOTIDE SEQUENCE [LARGE SCALE MRNA] (ISOFORM 1)</scope>
    <source>
        <tissue>Brain</tissue>
        <tissue>Colon</tissue>
    </source>
</reference>
<reference key="7">
    <citation type="journal article" date="2007" name="Nature">
        <title>Genetic variants regulating ORMDL3 expression contribute to the risk of childhood asthma.</title>
        <authorList>
            <person name="Moffatt M.F."/>
            <person name="Kabesch M."/>
            <person name="Liang L."/>
            <person name="Dixon A.L."/>
            <person name="Strachan D."/>
            <person name="Heath S."/>
            <person name="Depner M."/>
            <person name="von Berg A."/>
            <person name="Bufe A."/>
            <person name="Rietschel E."/>
            <person name="Heinzmann A."/>
            <person name="Simma B."/>
            <person name="Frischer T."/>
            <person name="Willis-Owen S.A."/>
            <person name="Wong K.C."/>
            <person name="Illig T."/>
            <person name="Vogelberg C."/>
            <person name="Weiland S.K."/>
            <person name="von Mutius E."/>
            <person name="Abecasis G.R."/>
            <person name="Farrall M."/>
            <person name="Gut I.G."/>
            <person name="Lathrop G.M."/>
            <person name="Cookson W.O."/>
        </authorList>
    </citation>
    <scope>INVOLVEMENT IN SUSCEPTIBILITY TO ASTHMA</scope>
</reference>
<reference key="8">
    <citation type="journal article" date="2008" name="J. Allergy Clin. Immunol.">
        <title>A polymorphism controlling ORMDL3 expression is associated with asthma that is poorly controlled by current medications.</title>
        <authorList>
            <person name="Tavendale R."/>
            <person name="Macgregor D.F."/>
            <person name="Mukhopadhyay S."/>
            <person name="Palmer C.N."/>
        </authorList>
    </citation>
    <scope>INVOLVEMENT IN SUSCEPTIBILITY TO ASTHMA</scope>
</reference>
<reference key="9">
    <citation type="journal article" date="2008" name="J. Allergy Clin. Immunol.">
        <title>ORMDL3 variants associated with asthma susceptibility in North Americans of European ancestry.</title>
        <authorList>
            <person name="Sleiman P.M."/>
            <person name="Annaiah K."/>
            <person name="Imielinski M."/>
            <person name="Bradfield J.P."/>
            <person name="Kim C.E."/>
            <person name="Frackelton E.C."/>
            <person name="Glessner J.T."/>
            <person name="Eckert A.W."/>
            <person name="Otieno F.G."/>
            <person name="Santa E."/>
            <person name="Thomas K."/>
            <person name="Smith R.M."/>
            <person name="Glaberson W."/>
            <person name="Garris M."/>
            <person name="Gunnlaugsson S."/>
            <person name="Chiavacci R.M."/>
            <person name="Allen J."/>
            <person name="Spergel J."/>
            <person name="Grundmeier R."/>
            <person name="Grunstein M.M."/>
            <person name="Magnusson M."/>
            <person name="Bisgaard H."/>
            <person name="Grant S.F."/>
            <person name="Hakonarson H."/>
        </authorList>
    </citation>
    <scope>INVOLVEMENT IN SUSCEPTIBILITY TO ASTHMA</scope>
</reference>
<reference key="10">
    <citation type="journal article" date="2009" name="Allergy">
        <title>Genetic variation in ORM1-like 3 (ORMDL3) and gasdermin-like (GSDML) and childhood asthma.</title>
        <authorList>
            <person name="Wu H."/>
            <person name="Romieu I."/>
            <person name="Sienra-Monge J.J."/>
            <person name="Li H."/>
            <person name="del Rio-Navarro B.E."/>
            <person name="London S.J."/>
        </authorList>
    </citation>
    <scope>INVOLVEMENT IN SUSCEPTIBILITY TO ASTHMA</scope>
</reference>
<reference key="11">
    <citation type="journal article" date="2010" name="Hum. Mol. Genet.">
        <title>The asthma-associated ORMDL3 gene product regulates endoplasmic reticulum-mediated calcium signaling and cellular stress.</title>
        <authorList>
            <person name="Cantero-Recasens G."/>
            <person name="Fandos C."/>
            <person name="Rubio-Moscardo F."/>
            <person name="Valverde M.A."/>
            <person name="Vicente R."/>
        </authorList>
    </citation>
    <scope>SUBCELLULAR LOCATION</scope>
    <scope>TOPOLOGY</scope>
</reference>
<reference key="12">
    <citation type="journal article" date="2010" name="Nature">
        <title>Orm family proteins mediate sphingolipid homeostasis.</title>
        <authorList>
            <person name="Breslow D.K."/>
            <person name="Collins S.R."/>
            <person name="Bodenmiller B."/>
            <person name="Aebersold R."/>
            <person name="Simons K."/>
            <person name="Shevchenko A."/>
            <person name="Ejsing C.S."/>
            <person name="Weissman J.S."/>
        </authorList>
    </citation>
    <scope>FUNCTION</scope>
    <scope>INTERACTION WITH SPTLC1</scope>
</reference>
<reference key="13">
    <citation type="journal article" date="2019" name="J. Biol. Chem.">
        <title>The ORMDL/Orm-serine palmitoyltransferase (SPT) complex is directly regulated by ceramide: Reconstitution of SPT regulation in isolated membranes.</title>
        <authorList>
            <person name="Davis D.L."/>
            <person name="Gable K."/>
            <person name="Suemitsu J."/>
            <person name="Dunn T.M."/>
            <person name="Wattenberg B.W."/>
        </authorList>
    </citation>
    <scope>FUNCTION</scope>
</reference>
<reference key="14">
    <citation type="journal article" date="2023" name="EMBO Rep.">
        <title>Sphingosine-1-phosphate controls endothelial sphingolipid homeostasis via ORMDL.</title>
        <authorList>
            <person name="Sasset L."/>
            <person name="Chowdhury K.H."/>
            <person name="Manzo O.L."/>
            <person name="Rubinelli L."/>
            <person name="Konrad C."/>
            <person name="Maschek J.A."/>
            <person name="Manfredi G."/>
            <person name="Holland W.L."/>
            <person name="Di Lorenzo A."/>
        </authorList>
    </citation>
    <scope>UBIQUITINATION</scope>
    <scope>HYDROXYLATION AT PRO-137</scope>
    <scope>MUTAGENESIS OF PRO-137</scope>
</reference>
<reference evidence="20 21 22 23 24" key="15">
    <citation type="journal article" date="2021" name="Nat. Struct. Mol. Biol.">
        <title>Structural insights into the regulation of human serine palmitoyltransferase complexes.</title>
        <authorList>
            <person name="Wang Y."/>
            <person name="Niu Y."/>
            <person name="Zhang Z."/>
            <person name="Gable K."/>
            <person name="Gupta S.D."/>
            <person name="Somashekarappa N."/>
            <person name="Han G."/>
            <person name="Zhao H."/>
            <person name="Myasnikov A.G."/>
            <person name="Kalathur R.C."/>
            <person name="Dunn T.M."/>
            <person name="Lee C.H."/>
        </authorList>
    </citation>
    <scope>STRUCTURE BY ELECTRON MICROSCOPY (2.60 ANGSTROMS) IN COMPLEX WITH SPTLC1; SPTLC2 AND SPTSSA</scope>
</reference>
<reference evidence="16 17 18 19" key="16">
    <citation type="journal article" date="2021" name="Nat. Struct. Mol. Biol.">
        <title>Structural insights into the assembly and substrate selectivity of human SPT-ORMDL3 complex.</title>
        <authorList>
            <person name="Li S."/>
            <person name="Xie T."/>
            <person name="Liu P."/>
            <person name="Wang L."/>
            <person name="Gong X."/>
        </authorList>
    </citation>
    <scope>STRUCTURE BY ELECTRON MICROSCOPY (3.20 ANGSTROMS) IN COMPLEX WITH SPTLC1; SPTSSA AND ORMDL3</scope>
    <scope>TOPOLOGY</scope>
</reference>
<reference evidence="25 26 27 28" key="17">
    <citation type="journal article" date="2023" name="Nat. Commun.">
        <title>Ceramide sensing by human SPT-ORMDL complex for establishing sphingolipid homeostasis.</title>
        <authorList>
            <person name="Xie T."/>
            <person name="Liu P."/>
            <person name="Wu X."/>
            <person name="Dong F."/>
            <person name="Zhang Z."/>
            <person name="Yue J."/>
            <person name="Mahawar U."/>
            <person name="Farooq F."/>
            <person name="Vohra H."/>
            <person name="Fang Q."/>
            <person name="Liu W."/>
            <person name="Wattenberg B.W."/>
            <person name="Gong X."/>
        </authorList>
    </citation>
    <scope>STRUCTURE BY ELECTRON MICROSCOPY (2.70 ANGSTROMS) IN COMPLEX WITH SPTLC1; SPTLC2 AND SPTSSA</scope>
    <scope>DOMAIN</scope>
    <scope>FUNCTION</scope>
    <scope>MUTAGENESIS OF 2-ASN--MET-17; 2-ASN--SER-8; ASN-2; ASN-13; VAL-16; ILE-22; PHE-63 AND HIS-85</scope>
</reference>
<accession>Q8N138</accession>
<accession>B3KS83</accession>
<accession>Q6UY83</accession>
<sequence length="153" mass="17495">MNVGTAHSEVNPNTRVMNSRGIWLSYVLAIGLLHIVLLSIPFVSVPVVWTLTNLIHNMGMYIFLHTVKGTPFETPDQGKARLLTHWEQMDYGVQFTASRKFLTITPIVLYFLTSFYTKYDQIHFVLNTVSLMSVLIPKLPQLHGVRIFGINKY</sequence>
<keyword id="KW-0002">3D-structure</keyword>
<keyword id="KW-0025">Alternative splicing</keyword>
<keyword id="KW-1058">Asthma</keyword>
<keyword id="KW-0256">Endoplasmic reticulum</keyword>
<keyword id="KW-0379">Hydroxylation</keyword>
<keyword id="KW-0472">Membrane</keyword>
<keyword id="KW-1267">Proteomics identification</keyword>
<keyword id="KW-1185">Reference proteome</keyword>
<keyword id="KW-0812">Transmembrane</keyword>
<keyword id="KW-1133">Transmembrane helix</keyword>
<keyword id="KW-0832">Ubl conjugation</keyword>
<dbReference type="EMBL" id="AF395708">
    <property type="protein sequence ID" value="AAM43507.1"/>
    <property type="molecule type" value="mRNA"/>
</dbReference>
<dbReference type="EMBL" id="AF373101">
    <property type="protein sequence ID" value="AAN76521.1"/>
    <property type="molecule type" value="mRNA"/>
</dbReference>
<dbReference type="EMBL" id="AF373102">
    <property type="protein sequence ID" value="AAN76522.1"/>
    <property type="molecule type" value="mRNA"/>
</dbReference>
<dbReference type="EMBL" id="AK074811">
    <property type="protein sequence ID" value="BAC11223.1"/>
    <property type="molecule type" value="mRNA"/>
</dbReference>
<dbReference type="EMBL" id="AY357943">
    <property type="protein sequence ID" value="AAQ57273.1"/>
    <property type="molecule type" value="mRNA"/>
</dbReference>
<dbReference type="EMBL" id="AK075212">
    <property type="protein sequence ID" value="BAC11476.1"/>
    <property type="molecule type" value="mRNA"/>
</dbReference>
<dbReference type="EMBL" id="AK093063">
    <property type="protein sequence ID" value="BAG52645.1"/>
    <property type="molecule type" value="mRNA"/>
</dbReference>
<dbReference type="EMBL" id="CH471152">
    <property type="protein sequence ID" value="EAW60617.1"/>
    <property type="molecule type" value="Genomic_DNA"/>
</dbReference>
<dbReference type="EMBL" id="BC017087">
    <property type="protein sequence ID" value="AAH17087.1"/>
    <property type="molecule type" value="mRNA"/>
</dbReference>
<dbReference type="EMBL" id="BC071833">
    <property type="protein sequence ID" value="AAH71833.1"/>
    <property type="molecule type" value="mRNA"/>
</dbReference>
<dbReference type="CCDS" id="CCDS11355.1">
    <molecule id="Q8N138-1"/>
</dbReference>
<dbReference type="RefSeq" id="NP_001307730.1">
    <molecule id="Q8N138-1"/>
    <property type="nucleotide sequence ID" value="NM_001320801.2"/>
</dbReference>
<dbReference type="RefSeq" id="NP_001307731.1">
    <molecule id="Q8N138-1"/>
    <property type="nucleotide sequence ID" value="NM_001320802.2"/>
</dbReference>
<dbReference type="RefSeq" id="NP_001307732.1">
    <molecule id="Q8N138-1"/>
    <property type="nucleotide sequence ID" value="NM_001320803.1"/>
</dbReference>
<dbReference type="RefSeq" id="NP_644809.1">
    <molecule id="Q8N138-1"/>
    <property type="nucleotide sequence ID" value="NM_139280.4"/>
</dbReference>
<dbReference type="RefSeq" id="XP_016880835.1">
    <property type="nucleotide sequence ID" value="XM_017025346.1"/>
</dbReference>
<dbReference type="RefSeq" id="XP_016880836.1">
    <property type="nucleotide sequence ID" value="XM_017025347.1"/>
</dbReference>
<dbReference type="RefSeq" id="XP_016880837.1">
    <property type="nucleotide sequence ID" value="XM_017025348.1"/>
</dbReference>
<dbReference type="RefSeq" id="XP_047293049.1">
    <molecule id="Q8N138-1"/>
    <property type="nucleotide sequence ID" value="XM_047437093.1"/>
</dbReference>
<dbReference type="RefSeq" id="XP_047293050.1">
    <molecule id="Q8N138-1"/>
    <property type="nucleotide sequence ID" value="XM_047437094.1"/>
</dbReference>
<dbReference type="RefSeq" id="XP_047293051.1">
    <molecule id="Q8N138-1"/>
    <property type="nucleotide sequence ID" value="XM_047437095.1"/>
</dbReference>
<dbReference type="RefSeq" id="XP_054173807.1">
    <molecule id="Q8N138-1"/>
    <property type="nucleotide sequence ID" value="XM_054317832.1"/>
</dbReference>
<dbReference type="RefSeq" id="XP_054173808.1">
    <molecule id="Q8N138-1"/>
    <property type="nucleotide sequence ID" value="XM_054317833.1"/>
</dbReference>
<dbReference type="PDB" id="6M4N">
    <property type="method" value="EM"/>
    <property type="resolution" value="3.80 A"/>
    <property type="chains" value="C/G=1-153"/>
</dbReference>
<dbReference type="PDB" id="6M4O">
    <property type="method" value="EM"/>
    <property type="resolution" value="3.40 A"/>
    <property type="chains" value="A=1-153"/>
</dbReference>
<dbReference type="PDB" id="7CQI">
    <property type="method" value="EM"/>
    <property type="resolution" value="3.20 A"/>
    <property type="chains" value="A=1-153"/>
</dbReference>
<dbReference type="PDB" id="7CQK">
    <property type="method" value="EM"/>
    <property type="resolution" value="3.30 A"/>
    <property type="chains" value="A=1-153"/>
</dbReference>
<dbReference type="PDB" id="7K0M">
    <property type="method" value="EM"/>
    <property type="resolution" value="2.90 A"/>
    <property type="chains" value="D/H=1-153"/>
</dbReference>
<dbReference type="PDB" id="7K0N">
    <property type="method" value="EM"/>
    <property type="resolution" value="3.10 A"/>
    <property type="chains" value="D/H=1-153"/>
</dbReference>
<dbReference type="PDB" id="7K0O">
    <property type="method" value="EM"/>
    <property type="resolution" value="3.10 A"/>
    <property type="chains" value="D/H=1-153"/>
</dbReference>
<dbReference type="PDB" id="7K0P">
    <property type="method" value="EM"/>
    <property type="resolution" value="3.10 A"/>
    <property type="chains" value="D/H=1-153"/>
</dbReference>
<dbReference type="PDB" id="7K0Q">
    <property type="method" value="EM"/>
    <property type="resolution" value="3.30 A"/>
    <property type="chains" value="D=1-153"/>
</dbReference>
<dbReference type="PDB" id="7YIU">
    <property type="method" value="EM"/>
    <property type="resolution" value="2.90 A"/>
    <property type="chains" value="D=1-153"/>
</dbReference>
<dbReference type="PDB" id="7YIY">
    <property type="method" value="EM"/>
    <property type="resolution" value="2.70 A"/>
    <property type="chains" value="D=1-153"/>
</dbReference>
<dbReference type="PDB" id="7YJ1">
    <property type="method" value="EM"/>
    <property type="resolution" value="3.10 A"/>
    <property type="chains" value="D=3-153"/>
</dbReference>
<dbReference type="PDB" id="7YJ2">
    <property type="method" value="EM"/>
    <property type="resolution" value="2.90 A"/>
    <property type="chains" value="D=1-153"/>
</dbReference>
<dbReference type="PDBsum" id="6M4N"/>
<dbReference type="PDBsum" id="6M4O"/>
<dbReference type="PDBsum" id="7CQI"/>
<dbReference type="PDBsum" id="7CQK"/>
<dbReference type="PDBsum" id="7K0M"/>
<dbReference type="PDBsum" id="7K0N"/>
<dbReference type="PDBsum" id="7K0O"/>
<dbReference type="PDBsum" id="7K0P"/>
<dbReference type="PDBsum" id="7K0Q"/>
<dbReference type="PDBsum" id="7YIU"/>
<dbReference type="PDBsum" id="7YIY"/>
<dbReference type="PDBsum" id="7YJ1"/>
<dbReference type="PDBsum" id="7YJ2"/>
<dbReference type="EMDB" id="EMD-22602"/>
<dbReference type="EMDB" id="EMD-22604"/>
<dbReference type="EMDB" id="EMD-22605"/>
<dbReference type="EMDB" id="EMD-22606"/>
<dbReference type="EMDB" id="EMD-22608"/>
<dbReference type="EMDB" id="EMD-30079"/>
<dbReference type="EMDB" id="EMD-30080"/>
<dbReference type="EMDB" id="EMD-30441"/>
<dbReference type="EMDB" id="EMD-30442"/>
<dbReference type="EMDB" id="EMD-33864"/>
<dbReference type="EMDB" id="EMD-33866"/>
<dbReference type="EMDB" id="EMD-33868"/>
<dbReference type="EMDB" id="EMD-33869"/>
<dbReference type="SMR" id="Q8N138"/>
<dbReference type="BioGRID" id="125114">
    <property type="interactions" value="61"/>
</dbReference>
<dbReference type="CORUM" id="Q8N138"/>
<dbReference type="DIP" id="DIP-48687N"/>
<dbReference type="FunCoup" id="Q8N138">
    <property type="interactions" value="928"/>
</dbReference>
<dbReference type="IntAct" id="Q8N138">
    <property type="interactions" value="50"/>
</dbReference>
<dbReference type="STRING" id="9606.ENSP00000377724"/>
<dbReference type="iPTMnet" id="Q8N138"/>
<dbReference type="PhosphoSitePlus" id="Q8N138"/>
<dbReference type="BioMuta" id="ORMDL3"/>
<dbReference type="DMDM" id="74728486"/>
<dbReference type="jPOST" id="Q8N138"/>
<dbReference type="MassIVE" id="Q8N138"/>
<dbReference type="PaxDb" id="9606-ENSP00000377724"/>
<dbReference type="PeptideAtlas" id="Q8N138"/>
<dbReference type="ProteomicsDB" id="71543">
    <molecule id="Q8N138-1"/>
</dbReference>
<dbReference type="ProteomicsDB" id="71544">
    <molecule id="Q8N138-4"/>
</dbReference>
<dbReference type="Pumba" id="Q8N138"/>
<dbReference type="TopDownProteomics" id="Q8N138-1">
    <molecule id="Q8N138-1"/>
</dbReference>
<dbReference type="Antibodypedia" id="54876">
    <property type="antibodies" value="112 antibodies from 22 providers"/>
</dbReference>
<dbReference type="DNASU" id="94103"/>
<dbReference type="Ensembl" id="ENST00000304046.7">
    <molecule id="Q8N138-1"/>
    <property type="protein sequence ID" value="ENSP00000304858.2"/>
    <property type="gene ID" value="ENSG00000172057.10"/>
</dbReference>
<dbReference type="Ensembl" id="ENST00000394169.5">
    <molecule id="Q8N138-1"/>
    <property type="protein sequence ID" value="ENSP00000377724.1"/>
    <property type="gene ID" value="ENSG00000172057.10"/>
</dbReference>
<dbReference type="Ensembl" id="ENST00000579695.5">
    <molecule id="Q8N138-1"/>
    <property type="protein sequence ID" value="ENSP00000464693.1"/>
    <property type="gene ID" value="ENSG00000172057.10"/>
</dbReference>
<dbReference type="Ensembl" id="ENST00000584220.5">
    <molecule id="Q8N138-4"/>
    <property type="protein sequence ID" value="ENSP00000464455.1"/>
    <property type="gene ID" value="ENSG00000172057.10"/>
</dbReference>
<dbReference type="GeneID" id="94103"/>
<dbReference type="KEGG" id="hsa:94103"/>
<dbReference type="MANE-Select" id="ENST00000304046.7">
    <property type="protein sequence ID" value="ENSP00000304858.2"/>
    <property type="RefSeq nucleotide sequence ID" value="NM_139280.4"/>
    <property type="RefSeq protein sequence ID" value="NP_644809.1"/>
</dbReference>
<dbReference type="UCSC" id="uc002htj.3">
    <molecule id="Q8N138-1"/>
    <property type="organism name" value="human"/>
</dbReference>
<dbReference type="AGR" id="HGNC:16038"/>
<dbReference type="CTD" id="94103"/>
<dbReference type="DisGeNET" id="94103"/>
<dbReference type="GeneCards" id="ORMDL3"/>
<dbReference type="HGNC" id="HGNC:16038">
    <property type="gene designation" value="ORMDL3"/>
</dbReference>
<dbReference type="HPA" id="ENSG00000172057">
    <property type="expression patterns" value="Tissue enhanced (liver)"/>
</dbReference>
<dbReference type="MIM" id="600807">
    <property type="type" value="phenotype"/>
</dbReference>
<dbReference type="MIM" id="610075">
    <property type="type" value="gene"/>
</dbReference>
<dbReference type="neXtProt" id="NX_Q8N138"/>
<dbReference type="OpenTargets" id="ENSG00000172057"/>
<dbReference type="PharmGKB" id="PA32821"/>
<dbReference type="VEuPathDB" id="HostDB:ENSG00000172057"/>
<dbReference type="eggNOG" id="KOG3319">
    <property type="taxonomic scope" value="Eukaryota"/>
</dbReference>
<dbReference type="GeneTree" id="ENSGT00950000183178"/>
<dbReference type="HOGENOM" id="CLU_072117_3_0_1"/>
<dbReference type="InParanoid" id="Q8N138"/>
<dbReference type="OMA" id="WTAYILI"/>
<dbReference type="OrthoDB" id="1932233at2759"/>
<dbReference type="PAN-GO" id="Q8N138">
    <property type="GO annotations" value="4 GO annotations based on evolutionary models"/>
</dbReference>
<dbReference type="PhylomeDB" id="Q8N138"/>
<dbReference type="TreeFam" id="TF323369"/>
<dbReference type="PathwayCommons" id="Q8N138"/>
<dbReference type="Reactome" id="R-HSA-1660661">
    <property type="pathway name" value="Sphingolipid de novo biosynthesis"/>
</dbReference>
<dbReference type="Reactome" id="R-HSA-6798695">
    <property type="pathway name" value="Neutrophil degranulation"/>
</dbReference>
<dbReference type="SignaLink" id="Q8N138"/>
<dbReference type="BioGRID-ORCS" id="94103">
    <property type="hits" value="17 hits in 1164 CRISPR screens"/>
</dbReference>
<dbReference type="ChiTaRS" id="ORMDL3">
    <property type="organism name" value="human"/>
</dbReference>
<dbReference type="GenomeRNAi" id="94103"/>
<dbReference type="Pharos" id="Q8N138">
    <property type="development level" value="Tbio"/>
</dbReference>
<dbReference type="PRO" id="PR:Q8N138"/>
<dbReference type="Proteomes" id="UP000005640">
    <property type="component" value="Chromosome 17"/>
</dbReference>
<dbReference type="RNAct" id="Q8N138">
    <property type="molecule type" value="protein"/>
</dbReference>
<dbReference type="Bgee" id="ENSG00000172057">
    <property type="expression patterns" value="Expressed in right lobe of liver and 179 other cell types or tissues"/>
</dbReference>
<dbReference type="ExpressionAtlas" id="Q8N138">
    <property type="expression patterns" value="baseline and differential"/>
</dbReference>
<dbReference type="GO" id="GO:0005783">
    <property type="term" value="C:endoplasmic reticulum"/>
    <property type="evidence" value="ECO:0000314"/>
    <property type="project" value="HPA"/>
</dbReference>
<dbReference type="GO" id="GO:0005789">
    <property type="term" value="C:endoplasmic reticulum membrane"/>
    <property type="evidence" value="ECO:0007669"/>
    <property type="project" value="UniProtKB-SubCell"/>
</dbReference>
<dbReference type="GO" id="GO:0005886">
    <property type="term" value="C:plasma membrane"/>
    <property type="evidence" value="ECO:0000304"/>
    <property type="project" value="Reactome"/>
</dbReference>
<dbReference type="GO" id="GO:0030667">
    <property type="term" value="C:secretory granule membrane"/>
    <property type="evidence" value="ECO:0000304"/>
    <property type="project" value="Reactome"/>
</dbReference>
<dbReference type="GO" id="GO:0017059">
    <property type="term" value="C:serine palmitoyltransferase complex"/>
    <property type="evidence" value="ECO:0000314"/>
    <property type="project" value="UniProtKB"/>
</dbReference>
<dbReference type="GO" id="GO:0035579">
    <property type="term" value="C:specific granule membrane"/>
    <property type="evidence" value="ECO:0000304"/>
    <property type="project" value="Reactome"/>
</dbReference>
<dbReference type="GO" id="GO:0006672">
    <property type="term" value="P:ceramide metabolic process"/>
    <property type="evidence" value="ECO:0000315"/>
    <property type="project" value="UniProtKB"/>
</dbReference>
<dbReference type="GO" id="GO:0090156">
    <property type="term" value="P:intracellular sphingolipid homeostasis"/>
    <property type="evidence" value="ECO:0000318"/>
    <property type="project" value="GO_Central"/>
</dbReference>
<dbReference type="GO" id="GO:0061744">
    <property type="term" value="P:motor behavior"/>
    <property type="evidence" value="ECO:0007669"/>
    <property type="project" value="Ensembl"/>
</dbReference>
<dbReference type="GO" id="GO:0042552">
    <property type="term" value="P:myelination"/>
    <property type="evidence" value="ECO:0007669"/>
    <property type="project" value="Ensembl"/>
</dbReference>
<dbReference type="GO" id="GO:0002903">
    <property type="term" value="P:negative regulation of B cell apoptotic process"/>
    <property type="evidence" value="ECO:0000315"/>
    <property type="project" value="MGI"/>
</dbReference>
<dbReference type="GO" id="GO:1900060">
    <property type="term" value="P:negative regulation of ceramide biosynthetic process"/>
    <property type="evidence" value="ECO:0000315"/>
    <property type="project" value="MGI"/>
</dbReference>
<dbReference type="GO" id="GO:0010508">
    <property type="term" value="P:positive regulation of autophagy"/>
    <property type="evidence" value="ECO:0000314"/>
    <property type="project" value="MGI"/>
</dbReference>
<dbReference type="GO" id="GO:1900182">
    <property type="term" value="P:positive regulation of protein localization to nucleus"/>
    <property type="evidence" value="ECO:0000314"/>
    <property type="project" value="MGI"/>
</dbReference>
<dbReference type="GO" id="GO:0006940">
    <property type="term" value="P:regulation of smooth muscle contraction"/>
    <property type="evidence" value="ECO:0007669"/>
    <property type="project" value="Ensembl"/>
</dbReference>
<dbReference type="GO" id="GO:0030148">
    <property type="term" value="P:sphingolipid biosynthetic process"/>
    <property type="evidence" value="ECO:0000318"/>
    <property type="project" value="GO_Central"/>
</dbReference>
<dbReference type="GO" id="GO:0006686">
    <property type="term" value="P:sphingomyelin biosynthetic process"/>
    <property type="evidence" value="ECO:0007669"/>
    <property type="project" value="Ensembl"/>
</dbReference>
<dbReference type="InterPro" id="IPR007203">
    <property type="entry name" value="ORMDL"/>
</dbReference>
<dbReference type="PANTHER" id="PTHR12665">
    <property type="entry name" value="ORMDL PROTEINS"/>
    <property type="match status" value="1"/>
</dbReference>
<dbReference type="Pfam" id="PF04061">
    <property type="entry name" value="ORMDL"/>
    <property type="match status" value="1"/>
</dbReference>
<dbReference type="PIRSF" id="PIRSF018147">
    <property type="entry name" value="ORMDL"/>
    <property type="match status" value="1"/>
</dbReference>
<protein>
    <recommendedName>
        <fullName>ORM1-like protein 3</fullName>
    </recommendedName>
</protein>